<proteinExistence type="inferred from homology"/>
<keyword id="KW-0472">Membrane</keyword>
<keyword id="KW-0520">NAD</keyword>
<keyword id="KW-0521">NADP</keyword>
<keyword id="KW-0618">Plastoquinone</keyword>
<keyword id="KW-0874">Quinone</keyword>
<keyword id="KW-0793">Thylakoid</keyword>
<keyword id="KW-1278">Translocase</keyword>
<keyword id="KW-0813">Transport</keyword>
<feature type="chain" id="PRO_0000352225" description="NAD(P)H-quinone oxidoreductase subunit N">
    <location>
        <begin position="1"/>
        <end position="158"/>
    </location>
</feature>
<evidence type="ECO:0000255" key="1">
    <source>
        <dbReference type="HAMAP-Rule" id="MF_01353"/>
    </source>
</evidence>
<dbReference type="EC" id="7.1.1.-" evidence="1"/>
<dbReference type="EMBL" id="CP000111">
    <property type="protein sequence ID" value="ABB50712.1"/>
    <property type="molecule type" value="Genomic_DNA"/>
</dbReference>
<dbReference type="RefSeq" id="WP_011377193.1">
    <property type="nucleotide sequence ID" value="NC_007577.1"/>
</dbReference>
<dbReference type="SMR" id="Q318I3"/>
<dbReference type="STRING" id="74546.PMT9312_1651"/>
<dbReference type="KEGG" id="pmi:PMT9312_1651"/>
<dbReference type="eggNOG" id="ENOG5033TWM">
    <property type="taxonomic scope" value="Bacteria"/>
</dbReference>
<dbReference type="HOGENOM" id="CLU_087432_0_0_3"/>
<dbReference type="OrthoDB" id="510798at2"/>
<dbReference type="Proteomes" id="UP000002715">
    <property type="component" value="Chromosome"/>
</dbReference>
<dbReference type="GO" id="GO:0031676">
    <property type="term" value="C:plasma membrane-derived thylakoid membrane"/>
    <property type="evidence" value="ECO:0007669"/>
    <property type="project" value="UniProtKB-SubCell"/>
</dbReference>
<dbReference type="GO" id="GO:0016655">
    <property type="term" value="F:oxidoreductase activity, acting on NAD(P)H, quinone or similar compound as acceptor"/>
    <property type="evidence" value="ECO:0007669"/>
    <property type="project" value="UniProtKB-UniRule"/>
</dbReference>
<dbReference type="GO" id="GO:0048038">
    <property type="term" value="F:quinone binding"/>
    <property type="evidence" value="ECO:0007669"/>
    <property type="project" value="UniProtKB-KW"/>
</dbReference>
<dbReference type="HAMAP" id="MF_01353">
    <property type="entry name" value="NDH1_NDH1N"/>
    <property type="match status" value="1"/>
</dbReference>
<dbReference type="InterPro" id="IPR020874">
    <property type="entry name" value="NAD(P)H-quinone_OxRdtase_su_N"/>
</dbReference>
<dbReference type="PANTHER" id="PTHR35515">
    <property type="entry name" value="NAD(P)H-QUINONE OXIDOREDUCTASE SUBUNIT N, CHLOROPLASTIC"/>
    <property type="match status" value="1"/>
</dbReference>
<dbReference type="PANTHER" id="PTHR35515:SF1">
    <property type="entry name" value="NAD(P)H-QUINONE OXIDOREDUCTASE SUBUNIT N, CHLOROPLASTIC"/>
    <property type="match status" value="1"/>
</dbReference>
<dbReference type="Pfam" id="PF11909">
    <property type="entry name" value="NdhN"/>
    <property type="match status" value="1"/>
</dbReference>
<comment type="function">
    <text evidence="1">NDH-1 shuttles electrons from an unknown electron donor, via FMN and iron-sulfur (Fe-S) centers, to quinones in the respiratory and/or the photosynthetic chain. The immediate electron acceptor for the enzyme in this species is believed to be plastoquinone. Couples the redox reaction to proton translocation, and thus conserves the redox energy in a proton gradient. Cyanobacterial NDH-1 also plays a role in inorganic carbon-concentration.</text>
</comment>
<comment type="catalytic activity">
    <reaction evidence="1">
        <text>a plastoquinone + NADH + (n+1) H(+)(in) = a plastoquinol + NAD(+) + n H(+)(out)</text>
        <dbReference type="Rhea" id="RHEA:42608"/>
        <dbReference type="Rhea" id="RHEA-COMP:9561"/>
        <dbReference type="Rhea" id="RHEA-COMP:9562"/>
        <dbReference type="ChEBI" id="CHEBI:15378"/>
        <dbReference type="ChEBI" id="CHEBI:17757"/>
        <dbReference type="ChEBI" id="CHEBI:57540"/>
        <dbReference type="ChEBI" id="CHEBI:57945"/>
        <dbReference type="ChEBI" id="CHEBI:62192"/>
    </reaction>
</comment>
<comment type="catalytic activity">
    <reaction evidence="1">
        <text>a plastoquinone + NADPH + (n+1) H(+)(in) = a plastoquinol + NADP(+) + n H(+)(out)</text>
        <dbReference type="Rhea" id="RHEA:42612"/>
        <dbReference type="Rhea" id="RHEA-COMP:9561"/>
        <dbReference type="Rhea" id="RHEA-COMP:9562"/>
        <dbReference type="ChEBI" id="CHEBI:15378"/>
        <dbReference type="ChEBI" id="CHEBI:17757"/>
        <dbReference type="ChEBI" id="CHEBI:57783"/>
        <dbReference type="ChEBI" id="CHEBI:58349"/>
        <dbReference type="ChEBI" id="CHEBI:62192"/>
    </reaction>
</comment>
<comment type="subunit">
    <text evidence="1">NDH-1 can be composed of about 15 different subunits; different subcomplexes with different compositions have been identified which probably have different functions.</text>
</comment>
<comment type="subcellular location">
    <subcellularLocation>
        <location evidence="1">Cellular thylakoid membrane</location>
        <topology evidence="1">Peripheral membrane protein</topology>
        <orientation evidence="1">Cytoplasmic side</orientation>
    </subcellularLocation>
</comment>
<comment type="similarity">
    <text evidence="1">Belongs to the complex I NdhN subunit family.</text>
</comment>
<gene>
    <name evidence="1" type="primary">ndhN</name>
    <name type="ordered locus">PMT9312_1651</name>
</gene>
<accession>Q318I3</accession>
<reference key="1">
    <citation type="journal article" date="2006" name="Science">
        <title>Genomic islands and the ecology and evolution of Prochlorococcus.</title>
        <authorList>
            <person name="Coleman M.L."/>
            <person name="Sullivan M.B."/>
            <person name="Martiny A.C."/>
            <person name="Steglich C."/>
            <person name="Barry K."/>
            <person name="Delong E.F."/>
            <person name="Chisholm S.W."/>
        </authorList>
    </citation>
    <scope>NUCLEOTIDE SEQUENCE [LARGE SCALE GENOMIC DNA]</scope>
    <source>
        <strain>MIT 9312</strain>
    </source>
</reference>
<sequence>MPLLLTGKQFHNDLKTNKCLAIFAPLEGGYETRLLRRMRAKGFKTFITSARGLGDPEVFLLKLHGVRPPHLGHQSVGRNGALGEVQQVIPQASELFNENDKNKLLWLLEGQVLSQSELESLIEICTNDNKLSIVVEMGGSRKLEWKPLSNYILDEFES</sequence>
<organism>
    <name type="scientific">Prochlorococcus marinus (strain MIT 9312)</name>
    <dbReference type="NCBI Taxonomy" id="74546"/>
    <lineage>
        <taxon>Bacteria</taxon>
        <taxon>Bacillati</taxon>
        <taxon>Cyanobacteriota</taxon>
        <taxon>Cyanophyceae</taxon>
        <taxon>Synechococcales</taxon>
        <taxon>Prochlorococcaceae</taxon>
        <taxon>Prochlorococcus</taxon>
    </lineage>
</organism>
<name>NDHN_PROM9</name>
<protein>
    <recommendedName>
        <fullName evidence="1">NAD(P)H-quinone oxidoreductase subunit N</fullName>
        <ecNumber evidence="1">7.1.1.-</ecNumber>
    </recommendedName>
    <alternativeName>
        <fullName evidence="1">NAD(P)H dehydrogenase I subunit N</fullName>
        <shortName evidence="1">NDH-1 subunit N</shortName>
        <shortName evidence="1">NDH-N</shortName>
    </alternativeName>
</protein>